<comment type="function">
    <molecule>Capsid protein</molecule>
    <text evidence="2 5 13 16 20 22 27 30 32 41 43">Forms an icosahedral capsid with a T=4 symmetry composed of 240 copies of the capsid protein surrounded by a lipid membrane through which penetrate 80 spikes composed of trimers of E1-E2 heterodimers (PubMed:12388725, PubMed:16407066, PubMed:22001018, PubMed:8415660). The capsid protein binds to the viral RNA genome at a site adjacent to a ribosome binding site for viral genome translation following genome release (By similarity). Possesses a protease activity that results in its autocatalytic cleavage from the nascent structural protein (PubMed:1944569). Following its self-cleavage, the capsid protein transiently associates with ribosomes, and within several minutes the protein binds to viral RNA and rapidly assembles into icosahedric core particles (By similarity). The resulting nucleocapsid eventually associates with the cytoplasmic domain of the spike glycoprotein E2 at the cell membrane, leading to budding and formation of mature virions (PubMed:9143274). In case of infection, new virions attach to target cells and after clathrin-mediated endocytosis their membrane fuses with the host endosomal membrane (PubMed:9707418). This leads to the release of the nucleocapsid into the cytoplasm, followed by an uncoating event necessary for the genomic RNA to become accessible (By similarity). The uncoating might be triggered by the interaction of capsid proteins with ribosomes (PubMed:3656418). Binding of ribosomes would release the genomic RNA since the same region is genomic RNA-binding and ribosome-binding (By similarity). Specifically inhibits interleukin-1 receptor-associated kinase 1/IRAK1-dependent signaling during viral entry, representing a means by which the alphaviruses may evade innate immune detection and activation prior to viral gene expression (PubMed:33673546).</text>
</comment>
<comment type="function">
    <molecule>Assembly protein E3</molecule>
    <text evidence="2">Provides the signal sequence for the translocation of the precursor of protein E3/E2 to the host endoplasmic reticulum. Furin-cleaved E3 remains associated with spike glycoprotein E1 and mediates pH protection of the latter during the transport via the secretory pathway. After virion release from the host cell, the assembly protein E3 is gradually released in the extracellular space.</text>
</comment>
<comment type="function">
    <molecule>Spike glycoprotein E2</molecule>
    <text evidence="2 40">Plays a role in viral attachment to target host cell, by binding to the cell receptors VLDLR or LRP8/APOER2 (PubMed:34929721). Synthesized as a pE2 precursor which is processed by furin at the cell membrane just before virion budding, giving rise to E2-E1 heterodimer. The pE2-E1 heterodimer is stable, whereas E2-E1 is unstable and dissociate at low pH. pE2 is processed at the last step, presumably to avoid E1 fusion activation before its final export to cell surface. E2 C-terminus contains a transitory transmembrane that would be disrupted by palmitoylation, resulting in reorientation of the C-terminal tail from lumenal to cytoplasmic side. This step is critical since E2 C-terminus is involved in budding by interacting with capsid proteins. This release of E2 C-terminus in cytoplasm occurs lately in protein export, and precludes premature assembly of particles at the endoplasmic reticulum membrane.</text>
</comment>
<comment type="function">
    <molecule>6K protein</molecule>
    <text evidence="2 14 18 29 39">Acts as a viroporin that participates in virus glycoprotein processing and transport to the plasma membrane, cell permeabilization and budding of viral particles (PubMed:12424249, PubMed:36191050, PubMed:8892914). Disrupts the calcium homeostasis of the cell, probably at the endoplasmic reticulum level resulting in the increased levels of cytoplasmic calcium (PubMed:17483865). Because of its lipophilic properties, the 6K protein is postulated to influence the selection of lipids that interact with the transmembrane domains of the glycoproteins, which, in turn, affects the deformability of the bilayer required for the extreme curvature that occurs as budding proceeds. Present in low amount in virions, about 3% compared to viral glycoproteins (By similarity).</text>
</comment>
<comment type="function">
    <molecule>Spike glycoprotein E1</molecule>
    <text evidence="12 15 21 28">Class II viral fusion protein. Fusion activity is inactive as long as E1 is bound to E2 in mature virion (PubMed:12573591, PubMed:21124457). After virus attachment to target cell via host VLDLR or LRP8/APOER2 and endocytosis, acidification of the endosome induces dissociation of E1/E2 heterodimer and concomitant trimerization of the E1 subunits (PubMed:21124457, PubMed:34929721). This E1 trimer is fusion active, and promotes release of viral nucleocapsid in cytoplasm after endosome and viral membrane fusion (PubMed:21124457). Efficient fusion requires the presence of cholesterol and sphingolipid in the target membrane (PubMed:10482600).</text>
</comment>
<comment type="catalytic activity">
    <reaction evidence="2">
        <text>Autocatalytic release of the core protein from the N-terminus of the togavirus structural polyprotein by hydrolysis of a -Trp-|-Ser- bond.</text>
        <dbReference type="EC" id="3.4.21.90"/>
    </reaction>
</comment>
<comment type="activity regulation">
    <text evidence="29">The channel activity is blocked by 5-N, N-Hexamethylene amiloride.</text>
</comment>
<comment type="subunit">
    <molecule>Capsid protein</molecule>
    <text evidence="8 13 22 27 37 41">Homomultimer (PubMed:12388725, PubMed:8736552). Interacts with host karyopherin KPNA4; this interaction allows the nuclear import of the viral capsid protein (By similarity). Interacts with spike glycoprotein E2 (PubMed:22001018, PubMed:9143274). Interacts with host IRAK1; the interaction leads to inhibition of IRAK1-dependent signaling (PubMed:33673546).</text>
</comment>
<comment type="subunit">
    <molecule>Precursor of protein E3/E2</molecule>
    <text evidence="36">The precursor of protein E3/E2 and E1 form a heterodimer shortly after synthesis (PubMed:8623521).</text>
</comment>
<comment type="subunit">
    <molecule>Spike glycoprotein E1</molecule>
    <text evidence="8 28 36 39">The precursor of protein E3/E2 and E1 form a heterodimer shortly after synthesis (PubMed:8623521). Processing of the precursor of protein E3/E2 into E2 and E3 results in a heterodimer of the spike glycoproteins E2 and E1 (PubMed:8623521). Spike at virion surface are constituted of a trimer of E2-E1 heterodimers (PubMed:8623521). After target cell attachment and endocytosis, E1 change conformation to form homotrimers (By similarity). E2-E1 heterodimers interact with host VLDLR or LRP8/APOER2 to mediate viral entry (PubMed:34929721). Interacts with 6K protein (PubMed:8892914).</text>
</comment>
<comment type="subunit">
    <molecule>Spike glycoprotein E2</molecule>
    <text evidence="16 22 28 36 39">Interacts with spike glycoprotein E1 (PubMed:8623521). Processing of the precursor of protein E3/E2 into E2 and E3 results in a heterodimer of the spike glycoproteins E2 and E1 (PubMed:8623521). Spike at virion surface are constituted of a trimer of E2-E1 heterodimers (PubMed:8623521). E2-E1 heterodimers interact with host VLDLR or LRP8/APOER2 to mediate viral entry (PubMed:34929721). Interacts with 6K protein (PubMed:8892914). Interacts with the capsid protein (PubMed:16407066, PubMed:22001018).</text>
</comment>
<comment type="subunit">
    <molecule>6K protein</molecule>
    <text evidence="6 39">Oligomer (By similarity). Interacts with spike glycoprotein E1 (PubMed:8892914). Interacts with spike glycoprotein E2 (PubMed:8892914).</text>
</comment>
<comment type="subcellular location">
    <molecule>Capsid protein</molecule>
    <subcellularLocation>
        <location evidence="31">Virion</location>
    </subcellularLocation>
    <subcellularLocation>
        <location evidence="24">Host cytoplasm</location>
    </subcellularLocation>
    <subcellularLocation>
        <location evidence="24">Host cell membrane</location>
    </subcellularLocation>
    <subcellularLocation>
        <location evidence="8">Host nucleus</location>
    </subcellularLocation>
    <text evidence="8">Shuttles between the cytoplasm and the nucleus.</text>
</comment>
<comment type="subcellular location">
    <molecule>Precursor of protein E3/E2</molecule>
    <subcellularLocation>
        <location evidence="1">Virion membrane</location>
        <topology evidence="9">Single-pass type I membrane protein</topology>
    </subcellularLocation>
    <subcellularLocation>
        <location evidence="38">Host cell membrane</location>
        <topology evidence="9">Single-pass type I membrane protein</topology>
    </subcellularLocation>
</comment>
<comment type="subcellular location">
    <molecule>Spike glycoprotein E2</molecule>
    <subcellularLocation>
        <location evidence="31">Virion membrane</location>
        <topology evidence="9">Single-pass type I membrane protein</topology>
    </subcellularLocation>
    <subcellularLocation>
        <location evidence="24 38">Host cell membrane</location>
        <topology evidence="9">Single-pass type I membrane protein</topology>
    </subcellularLocation>
</comment>
<comment type="subcellular location">
    <molecule>6K protein</molecule>
    <subcellularLocation>
        <location evidence="25">Host cell membrane</location>
        <topology evidence="9">Multi-pass membrane protein</topology>
    </subcellularLocation>
    <subcellularLocation>
        <location evidence="25">Virion membrane</location>
        <topology evidence="9">Multi-pass membrane protein</topology>
    </subcellularLocation>
    <subcellularLocation>
        <location evidence="29">Host Golgi apparatus</location>
    </subcellularLocation>
    <subcellularLocation>
        <location>Host Golgi apparatus</location>
        <location>Host trans-Golgi network</location>
    </subcellularLocation>
    <subcellularLocation>
        <location evidence="29">Host endoplasmic reticulum</location>
    </subcellularLocation>
</comment>
<comment type="subcellular location">
    <molecule>Spike glycoprotein E1</molecule>
    <subcellularLocation>
        <location evidence="31">Virion membrane</location>
        <topology evidence="9">Single-pass type I membrane protein</topology>
    </subcellularLocation>
    <subcellularLocation>
        <location evidence="26 38">Host cell membrane</location>
        <topology evidence="9">Single-pass type I membrane protein</topology>
    </subcellularLocation>
</comment>
<comment type="alternative products">
    <event type="ribosomal frameshifting"/>
    <isoform>
        <id>P03316-1</id>
        <name>Structural polyprotein</name>
        <sequence type="displayed"/>
    </isoform>
    <isoform>
        <id>P0DOK0-1</id>
        <name>Frameshifted structural polyprotein</name>
        <sequence type="external"/>
    </isoform>
</comment>
<comment type="domain">
    <molecule>Capsid protein</molecule>
    <text evidence="3 20">The very N-terminus also plays a role in the particle assembly process (By similarity). The N-terminus also contains a nuclear localization signal and a supra nuclear export signal (supraNES), which is an unusually strong NES that mediates host CRM1 binding in the absence of RanGTP and thus can bind CRM1, not only in the nucleus, but also in the cytoplasm (By similarity). The C-terminus functions as a protease during translation to cleave itself from the translating structural polyprotein (PubMed:1944569).</text>
</comment>
<comment type="domain">
    <molecule>Isoform Structural polyprotein</molecule>
    <text evidence="2">As soon as the capsid protein has been autocleaved, an internal uncleaved signal peptide directs the remaining polyprotein to the endoplasmic reticulum.</text>
</comment>
<comment type="PTM">
    <molecule>Isoform Structural polyprotein</molecule>
    <text evidence="2 23">Specific enzymatic cleavages in vivo yield mature proteins. Capsid protein is auto-cleaved during polyprotein translation, unmasking a signal peptide at the N-terminus of the precursor of E3/E2 (PubMed:2335827). The remaining polyprotein is then targeted to the host endoplasmic reticulum, where host signal peptidase cleaves it into pE2, 6K and E1 proteins. pE2 is further processed to mature E3 and E2 by host furin in trans-Golgi vesicle (By similarity).</text>
</comment>
<comment type="PTM">
    <molecule>Spike glycoprotein E2</molecule>
    <text evidence="17 33">Palmitoylated via thioester bonds. These palmitoylations may induce disruption of the C-terminus transmembrane. This would result in the reorientation of E2 C-terminus from lumenal to cytoplasmic side.</text>
</comment>
<comment type="PTM">
    <molecule>Spike glycoprotein E1</molecule>
    <text evidence="2">N-glycosylated.</text>
</comment>
<comment type="PTM">
    <molecule>Spike glycoprotein E2</molecule>
    <text evidence="2">N-glycosylated.</text>
</comment>
<comment type="PTM">
    <molecule>Assembly protein E3</molecule>
    <text evidence="2">N-glycosylated.</text>
</comment>
<comment type="PTM">
    <molecule>6K protein</molecule>
    <text evidence="2">Palmitoylated via thioester bonds.</text>
</comment>
<comment type="miscellaneous">
    <molecule>Isoform Structural polyprotein</molecule>
    <text evidence="7">Translated from a subgenomic RNA synthesized during togavirus replication.</text>
</comment>
<comment type="miscellaneous">
    <molecule>Isoform Structural polyprotein</molecule>
    <text>Produced by conventional translation.</text>
</comment>
<comment type="similarity">
    <text evidence="44">Belongs to the alphavirus structural polyprotein family.</text>
</comment>
<comment type="online information" name="Virus Particle ExploreR db">
    <link uri="https://viperdb.org/Info_Page.php?VDB=1ld4"/>
    <text>Icosahedral capsid structure</text>
</comment>
<protein>
    <recommendedName>
        <fullName>Structural polyprotein</fullName>
    </recommendedName>
    <alternativeName>
        <fullName>p130</fullName>
    </alternativeName>
    <component>
        <recommendedName>
            <fullName>Capsid protein</fullName>
            <ecNumber evidence="2">3.4.21.90</ecNumber>
        </recommendedName>
        <alternativeName>
            <fullName>Coat protein</fullName>
            <shortName>C</shortName>
        </alternativeName>
    </component>
    <component>
        <recommendedName>
            <fullName>Precursor of protein E3/E2</fullName>
        </recommendedName>
        <alternativeName>
            <fullName>p62</fullName>
        </alternativeName>
        <alternativeName>
            <fullName>pE2</fullName>
        </alternativeName>
    </component>
    <component>
        <recommendedName>
            <fullName>Assembly protein E3</fullName>
        </recommendedName>
    </component>
    <component>
        <recommendedName>
            <fullName>Spike glycoprotein E2</fullName>
        </recommendedName>
        <alternativeName>
            <fullName>E2 envelope glycoprotein</fullName>
        </alternativeName>
    </component>
    <component>
        <recommendedName>
            <fullName>6K protein</fullName>
        </recommendedName>
    </component>
    <component>
        <recommendedName>
            <fullName>Spike glycoprotein E1</fullName>
        </recommendedName>
        <alternativeName>
            <fullName>E1 envelope glycoprotein</fullName>
        </alternativeName>
    </component>
</protein>
<reference key="1">
    <citation type="journal article" date="1981" name="Proc. Natl. Acad. Sci. U.S.A.">
        <title>Nucleotide sequence of the 26S mRNA of Sindbis virus and deduced sequence of the encoded virus structural proteins.</title>
        <authorList>
            <person name="Rice C.M."/>
            <person name="Strauss J.H."/>
        </authorList>
    </citation>
    <scope>NUCLEOTIDE SEQUENCE [GENOMIC RNA]</scope>
    <source>
        <strain>HRLP</strain>
    </source>
</reference>
<reference key="2">
    <citation type="journal article" date="1984" name="Virology">
        <title>Complete nucleotide sequence of the genomic RNA of Sindbis virus.</title>
        <authorList>
            <person name="Strauss E.G."/>
            <person name="Rice C.M."/>
            <person name="Strauss J.H."/>
        </authorList>
    </citation>
    <scope>NUCLEOTIDE SEQUENCE [GENOMIC RNA]</scope>
    <source>
        <strain>HRSP</strain>
    </source>
</reference>
<reference key="3">
    <citation type="journal article" date="1986" name="Proc. Natl. Acad. Sci. U.S.A.">
        <title>A single nucleotide change in the E2 glycoprotein gene of Sindbis virus affects penetration rate in cell culture and virulence in neonatal mice.</title>
        <authorList>
            <person name="Davis N.L."/>
            <person name="Fuller F.J."/>
            <person name="Dougherty W.G."/>
            <person name="Olmsted R.A."/>
            <person name="Johnston R.E."/>
        </authorList>
    </citation>
    <scope>NUCLEOTIDE SEQUENCE [GENOMIC RNA]</scope>
    <source>
        <strain>AR339</strain>
    </source>
</reference>
<reference key="4">
    <citation type="submission" date="2007-12" db="EMBL/GenBank/DDBJ databases">
        <title>Sequence analysis of cDNA's derived from the RNA of Sindbis virus, a potential oncolytic virus.</title>
        <authorList>
            <person name="Saito K."/>
            <person name="Shirasawa H."/>
            <person name="Yahata E."/>
            <person name="Yuan Q."/>
        </authorList>
    </citation>
    <scope>NUCLEOTIDE SEQUENCE [GENOMIC RNA]</scope>
    <source>
        <strain>ov-100</strain>
    </source>
</reference>
<reference key="5">
    <citation type="journal article" date="1984" name="Proc. Natl. Acad. Sci. U.S.A.">
        <title>An evolutionary tree relating eight alphaviruses, based on amino-terminal sequences of their glycoproteins.</title>
        <authorList>
            <person name="Bell J.R."/>
            <person name="Kinney R.M."/>
            <person name="Trent D.W."/>
            <person name="Strauss E.G."/>
            <person name="Strauss J.H."/>
        </authorList>
    </citation>
    <scope>PROTEIN SEQUENCE OF 329-394</scope>
    <source>
        <strain>AR339</strain>
    </source>
</reference>
<reference key="6">
    <citation type="journal article" date="1977" name="J. Virol.">
        <title>Envelopments of Sindbis virus: synthesis and organization of proteins in cells infected with wild type and maturation-defective mutants.</title>
        <authorList>
            <person name="Smith J.F."/>
            <person name="Brown D.T."/>
        </authorList>
    </citation>
    <scope>SUBCELLULAR LOCATION (PRECURSOR OF PROTEIN E3/E2)</scope>
    <scope>SUBCELLULAR LOCATION (SPIKE GLYCOPROTEIN E2)</scope>
    <scope>SUBCELLULAR LOCATION (SPIKE GLYCOPROTEIN E1)</scope>
</reference>
<reference key="7">
    <citation type="journal article" date="1987" name="J. Mol. Biol.">
        <title>Organization of the Sindbis virus nucleocapsid as revealed by bifunctional cross-linking agents.</title>
        <authorList>
            <person name="Coombs K."/>
            <person name="Brown D.T."/>
        </authorList>
    </citation>
    <scope>FUNCTION (CAPSID PROTEIN)</scope>
</reference>
<reference key="8">
    <citation type="journal article" date="1987" name="Cell">
        <title>The T=4 envelope of Sindbis virus is organized by interactions with a complementary T=3 capsid.</title>
        <authorList>
            <person name="Fuller S.D."/>
        </authorList>
    </citation>
    <scope>SUBCELLULAR LOCATION (CAPSID PROTEIN)</scope>
    <scope>SUBCELLULAR LOCATION (SPIKE GLYCOPROTEIN E2)</scope>
    <scope>SUBCELLULAR LOCATION (SPIKE GLYCOPROTEIN E1)</scope>
</reference>
<reference key="9">
    <citation type="journal article" date="1989" name="Exp. Cell Res.">
        <title>Biosynthesis, membrane translocation, and surface expression of Sindbis virus E1 glycoprotein.</title>
        <authorList>
            <person name="Migliaccio G."/>
            <person name="Pascale M.C."/>
            <person name="Leone A."/>
            <person name="Bonatti S."/>
        </authorList>
    </citation>
    <scope>SUBCELLULAR LOCATION (SPIKE GLYCOPROTEIN E1)</scope>
</reference>
<reference key="10">
    <citation type="journal article" date="1990" name="J. Virol.">
        <title>Site-directed mutagenesis of the proposed catalytic amino acids of the Sindbis virus capsid protein autoprotease.</title>
        <authorList>
            <person name="Hahn C.S."/>
            <person name="Strauss J.H."/>
        </authorList>
    </citation>
    <scope>AUTOCATALYTIC CLEAVAGE (CAPSID PROTEIN)</scope>
    <scope>MUTAGENESIS OF HIS-141; ASP-147; ASP-163 AND SER-215</scope>
</reference>
<reference key="11">
    <citation type="journal article" date="1990" name="Virology">
        <title>The Sindbis virus 6K protein can be detected in virions and is acylated with fatty acids.</title>
        <authorList>
            <person name="Gaedigk-Nitschko K."/>
            <person name="Schlesinger M.J."/>
        </authorList>
    </citation>
    <scope>SUBCELLULAR LOCATION (6K PROTEIN)</scope>
</reference>
<reference key="12">
    <citation type="journal article" date="1991" name="Virology">
        <title>Site-directed mutations in Sindbis virus E2 glycoprotein's cytoplasmic domain and the 6K protein lead to similar defects in virus assembly and budding.</title>
        <authorList>
            <person name="Gaedigk-Nitschko K."/>
            <person name="Schlesinger M.J."/>
        </authorList>
    </citation>
    <scope>PALMITOYLATION AT CYS-724</scope>
    <scope>MUTAGENESIS OF CYS-724</scope>
</reference>
<reference key="13">
    <citation type="journal article" date="1991" name="Nature">
        <title>Structure of Sindbis virus core protein reveals a chymotrypsin-like serine proteinase and the organization of the virion.</title>
        <authorList>
            <person name="Choi H.K."/>
            <person name="Tong L."/>
            <person name="Minor W."/>
            <person name="Dumas P."/>
            <person name="Boege U."/>
            <person name="Rossmann M.G."/>
            <person name="Wengler G."/>
        </authorList>
    </citation>
    <scope>FUNCTION (CAPSID PROTEIN)</scope>
    <scope>ACTIVE SITE (CAPSID PROTEIN)</scope>
    <scope>DOMAIN (CAPSID PROTEIN)</scope>
</reference>
<reference key="14">
    <citation type="journal article" date="1993" name="Proc. Natl. Acad. Sci. U.S.A.">
        <title>Three-dimensional structure of a membrane-containing virus.</title>
        <authorList>
            <person name="Paredes A.M."/>
            <person name="Brown D.T."/>
            <person name="Rothnagel R."/>
            <person name="Chiu W."/>
            <person name="Schoepp R.J."/>
            <person name="Johnston R.E."/>
            <person name="Prasad B.V."/>
        </authorList>
    </citation>
    <scope>FUNCTION (CAPSID PROTEIN)</scope>
</reference>
<reference key="15">
    <citation type="journal article" date="1993" name="J. Cell Biol.">
        <title>Transient translocation of the cytoplasmic (endo) domain of a type I membrane glycoprotein into cellular membranes.</title>
        <authorList>
            <person name="Liu N."/>
            <person name="Brown D.T."/>
        </authorList>
    </citation>
    <scope>TOPOLOGY</scope>
</reference>
<reference key="16">
    <citation type="journal article" date="1993" name="J. Virol.">
        <title>Site-directed mutations in the Sindbis virus E2 glycoprotein identify palmitoylation sites and affect virus budding.</title>
        <authorList>
            <person name="Ivanova L."/>
            <person name="Schlesinger M.J."/>
        </authorList>
    </citation>
    <scope>PALMITOYLATION AT CYS-744 AND CYS-745</scope>
    <scope>MUTAGENESIS OF CYS-744 AND CYS-745</scope>
</reference>
<reference key="17">
    <citation type="journal article" date="1996" name="Virology">
        <title>Assembly of the Sindbis virus spike protein complex.</title>
        <authorList>
            <person name="Mulvey M."/>
            <person name="Brown D.T."/>
        </authorList>
    </citation>
    <scope>SUBUNIT (SPIKE GLYCOPROTEIN E1)</scope>
    <scope>SUBUNIT (SPIKE GLYCOPROTEIN E2)</scope>
    <scope>SUBUNIT (PRECURSOR OF PROTEIN E3/E2)</scope>
</reference>
<reference key="18">
    <citation type="journal article" date="1996" name="J. Virol.">
        <title>Interactions between PE2, E1, and 6K required for assembly of alphaviruses studied with chimeric viruses.</title>
        <authorList>
            <person name="Yao J.S."/>
            <person name="Strauss E.G."/>
            <person name="Strauss J.H."/>
        </authorList>
    </citation>
    <scope>FUNCTION (6K PROTEIN)</scope>
    <scope>INTERACTION WITH 6K PROTEIN (SPIKE GLYCOPROTEIN E1)</scope>
    <scope>INTERACTION WITH 6K PROTEIN (SPIKE GLYCOPROTEIN E2)</scope>
    <scope>INTERACTION WITH SPIKE GLYCOPROTEIN E1 (6K PROTEIN)</scope>
    <scope>INTERACTION WITH SPIKE GLYCOPROTEIN E2 (6K PROTEIN)</scope>
</reference>
<reference key="19">
    <citation type="journal article" date="1997" name="Virology">
        <title>Alphavirus budding is dependent on the interaction between the nucleocapsid and hydrophobic amino acids on the cytoplasmic domain of the E2 envelope glycoprotein.</title>
        <authorList>
            <person name="Owen K.E."/>
            <person name="Kuhn R.J."/>
        </authorList>
    </citation>
    <scope>FUNCTION (CAPSID PROTEIN)</scope>
    <scope>INTERACTION WITH SPIKE GLYCOPROTEIN E2 (CAPSID PROTEIN)</scope>
    <scope>INTERACTION WITH CAPSID PROTEIN (SPIKE GLYCOPROTEIN E2)</scope>
</reference>
<reference key="20">
    <citation type="journal article" date="1997" name="J. Virol.">
        <title>Role of glycoprotein PE2 in formation and maturation of the Sindbis virus spike.</title>
        <authorList>
            <person name="Carleton M."/>
            <person name="Lee H."/>
            <person name="Mulvey M."/>
            <person name="Brown D.T."/>
        </authorList>
    </citation>
    <scope>FUNCTION (SPIKE GLYCOPROTEIN E2)</scope>
</reference>
<reference key="21">
    <citation type="journal article" date="1998" name="J. Virol.">
        <title>Structural localization of the E3 glycoprotein in attenuated Sindbis virus mutants.</title>
        <authorList>
            <person name="Paredes A.M."/>
            <person name="Heidner H."/>
            <person name="Thuman-Commike P."/>
            <person name="Prasad B.V.V."/>
            <person name="Johnston R.E."/>
            <person name="Chiu W."/>
        </authorList>
    </citation>
    <scope>MUTAGENESIS OF TRP-264</scope>
</reference>
<reference key="22">
    <citation type="journal article" date="1998" name="EMBO J.">
        <title>The clathrin endocytic pathway in viral infection.</title>
        <authorList>
            <person name="DeTulleo L."/>
            <person name="Kirchhausen T."/>
        </authorList>
    </citation>
    <scope>FUNCTION (CAPSID PROTEIN)</scope>
</reference>
<reference key="23">
    <citation type="journal article" date="1999" name="J. Virol.">
        <title>Low-pH-dependent fusion of Sindbis virus with receptor-free cholesterol- and sphingolipid-containing liposomes.</title>
        <authorList>
            <person name="Smit J.M."/>
            <person name="Bittman R."/>
            <person name="Wilschut J."/>
        </authorList>
    </citation>
    <scope>FUNCTION (SPIKE GLYCOPROTEIN E1)</scope>
    <scope>FUNCTION (6K PROTEIN)</scope>
</reference>
<reference key="24">
    <citation type="journal article" date="2003" name="J. Biol. Chem.">
        <title>Interfacial domains in Sindbis virus 6K protein. Detection and functional characterization.</title>
        <authorList>
            <person name="Sanz M.A."/>
            <person name="Madan V."/>
            <person name="Carrasco L."/>
            <person name="Nieva J.L."/>
        </authorList>
    </citation>
    <scope>FUNCTION (6K PROTEIN)</scope>
</reference>
<reference key="25">
    <citation type="journal article" date="2003" name="Virology">
        <title>Individual expression of sindbis virus glycoproteins. E1 alone promotes cell fusion.</title>
        <authorList>
            <person name="Sanz M.A."/>
            <person name="Rejas M.T."/>
            <person name="Carrasco L."/>
        </authorList>
    </citation>
    <scope>FUNCTION (SPIKE GLYCOPROTEIN E1)</scope>
</reference>
<reference key="26">
    <citation type="journal article" date="2007" name="J. Membr. Biol.">
        <title>The alphavirus 6K protein activates endogenous ionic conductances when expressed in Xenopus oocytes.</title>
        <authorList>
            <person name="Antoine A.F."/>
            <person name="Montpellier C."/>
            <person name="Cailliau K."/>
            <person name="Browaeys-Poly E."/>
            <person name="Vilain J.P."/>
            <person name="Dubuisson J."/>
        </authorList>
    </citation>
    <scope>FUNCTION (6K PROTEIN)</scope>
</reference>
<reference key="27">
    <citation type="journal article" date="2009" name="J. Virol.">
        <title>Role of conserved cysteines in the alphavirus E3 protein.</title>
        <authorList>
            <person name="Parrott M.M."/>
            <person name="Sitarski S.A."/>
            <person name="Arnold R.J."/>
            <person name="Picton L.K."/>
            <person name="Hill R.B."/>
            <person name="Mukhopadhyay S."/>
        </authorList>
    </citation>
    <scope>DISULFIDE BOND (ASSEMBLY PROTEIN E3)</scope>
</reference>
<reference key="28">
    <citation type="journal article" date="2013" name="J. Virol.">
        <title>Imaging of the alphavirus capsid protein during virus replication.</title>
        <authorList>
            <person name="Zheng Y."/>
            <person name="Kielian M."/>
        </authorList>
    </citation>
    <scope>SUBCELLULAR LOCATION (CAPSID PROTEIN)</scope>
    <scope>SUBCELLULAR LOCATION (SPIKE GLYCOPROTEIN E2)</scope>
</reference>
<reference key="29">
    <citation type="journal article" date="2021" name="Viruses">
        <title>The Alphaviral Capsid Protein Inhibits IRAK1-Dependent TLR Signaling.</title>
        <authorList>
            <person name="Landers V.D."/>
            <person name="Wilkey D.W."/>
            <person name="Merchant M.L."/>
            <person name="Mitchell T.C."/>
            <person name="Sokoloski K.J."/>
        </authorList>
    </citation>
    <scope>FUNCTION (CAPSID PROTEIN)</scope>
    <scope>INTERACTION WITH HOST IRAK1 (CAPSID PROTEIN)</scope>
</reference>
<reference key="30">
    <citation type="journal article" date="2022" name="PLoS Pathog.">
        <title>Requirement of a functional ion channel for Sindbis virus glycoprotein transport, CPV-II formation, and efficient virus budding.</title>
        <authorList>
            <person name="Elmasri Z."/>
            <person name="Negi V."/>
            <person name="Kuhn R.J."/>
            <person name="Jose J."/>
        </authorList>
    </citation>
    <scope>FUNCTION (PROTEIN 6K)</scope>
    <scope>SUBCELLULAR LOCATION (PROTEIN 6K)</scope>
    <scope>ACTIVITY REGULATION (PROTEIN 6K)</scope>
</reference>
<reference key="31">
    <citation type="journal article" date="2022" name="Nature">
        <title>VLDLR and ApoER2 are receptors for multiple alphaviruses.</title>
        <authorList>
            <person name="Clark L.E."/>
            <person name="Clark S.A."/>
            <person name="Lin C."/>
            <person name="Liu J."/>
            <person name="Coscia A."/>
            <person name="Nabel K.G."/>
            <person name="Yang P."/>
            <person name="Neel D.V."/>
            <person name="Lee H."/>
            <person name="Brusic V."/>
            <person name="Stryapunina I."/>
            <person name="Plante K.S."/>
            <person name="Ahmed A.A."/>
            <person name="Catteruccia F."/>
            <person name="Young-Pearse T.L."/>
            <person name="Chiu I.M."/>
            <person name="Llopis P.M."/>
            <person name="Weaver S.C."/>
            <person name="Abraham J."/>
        </authorList>
    </citation>
    <scope>FUNCTION (SPIKE GLYCOPROTEIN E1)</scope>
    <scope>INTERACTION WITH HOST VLDLR AND LRP8/APOER2 (SPIKE GLYCOPROTEIN E1)</scope>
    <scope>FUNCTION (SPIKE GLYCOPROTEIN E2)</scope>
    <scope>INTERACTION WITH HOST VLDLR AND LRP8/APOER2 (SPIKE GLYCOPROTEIN E2)</scope>
    <source>
        <strain>DAK Ar Mg812</strain>
    </source>
</reference>
<reference evidence="54" key="32">
    <citation type="journal article" date="1993" name="J. Mol. Biol.">
        <title>Refined structure of Sindbis virus core protein and comparison with other chymotrypsin-like serine proteinase structures.</title>
        <authorList>
            <person name="Tong L."/>
            <person name="Wengler G."/>
            <person name="Rossmann M.G."/>
        </authorList>
    </citation>
    <scope>X-RAY CRYSTALLOGRAPHY (2.80 ANGSTROMS) OF 114-264</scope>
    <scope>ACTIVE SITE</scope>
</reference>
<reference evidence="45 46 47 48 49 50 55" key="33">
    <citation type="journal article" date="1996" name="J. Mol. Biol.">
        <title>Structural analysis of Sindbis virus capsid mutants involving assembly and catalysis.</title>
        <authorList>
            <person name="Choi H.-K."/>
            <person name="Lee S."/>
            <person name="Zhang Y.-P."/>
            <person name="McKinney B.R."/>
            <person name="Wengler G."/>
            <person name="Rossmann M.G."/>
            <person name="Kuhn R.J."/>
        </authorList>
    </citation>
    <scope>X-RAY CRYSTALLOGRAPHY (3.1 ANGSTROMS) OF 107-264</scope>
</reference>
<reference key="34">
    <citation type="journal article" date="1997" name="J. Mol. Biol.">
        <authorList>
            <person name="Choi H.-K."/>
            <person name="Lee S."/>
            <person name="Zhang Y.-P."/>
            <person name="McKinney B.R."/>
            <person name="Wengler G."/>
            <person name="Rossmann M.G."/>
            <person name="Kuhn R.J."/>
        </authorList>
    </citation>
    <scope>ERRATUM OF PUBMED:8831786</scope>
</reference>
<reference evidence="52" key="35">
    <citation type="journal article" date="1996" name="Structure">
        <title>Identification of a protein binding site on the surface of the alphavirus nucleocapsid and its implication in virus assembly.</title>
        <authorList>
            <person name="Lee S."/>
            <person name="Owen K.E."/>
            <person name="Choi H.K."/>
            <person name="Lee H."/>
            <person name="Lu G."/>
            <person name="Wengler G."/>
            <person name="Brown D.T."/>
            <person name="Rossmann M.G."/>
            <person name="Kuhn R.J."/>
        </authorList>
    </citation>
    <scope>X-RAY CRYSTALLOGRAPHY (2.00 ANGSTROMS) OF 106-266</scope>
    <scope>MUTAGENESIS OF 108-LEU--LEU-110 AND 109-LYS--GLU-111</scope>
    <scope>SUBUNIT (CAPSID PROTEIN)</scope>
</reference>
<reference evidence="51" key="36">
    <citation type="journal article" date="2002" name="J. Virol.">
        <title>Placement of the structural proteins in Sindbis virus.</title>
        <authorList>
            <person name="Zhang W."/>
            <person name="Mukhopadhyay S."/>
            <person name="Pletnev S.V."/>
            <person name="Baker T.S."/>
            <person name="Kuhn R.J."/>
            <person name="Rossmann M.G."/>
        </authorList>
    </citation>
    <scope>STRUCTURE BY ELECTRON MICROSCOPY (11.4 ANGSTROMS) OF 1-264 AND 807-1245</scope>
    <scope>DISULFIDE BONDS</scope>
    <scope>COILED COILS</scope>
    <scope>FUNCTION (CAPSID PROTEIN)</scope>
    <scope>GLYCOSYLATION AT ASN-524; ASN-646; ASN-945 AND ASN-1051</scope>
    <scope>SUBUNIT (CAPSID PROTEIN)</scope>
</reference>
<reference evidence="53" key="37">
    <citation type="journal article" date="2006" name="Structure">
        <title>Mapping the structure and function of the E1 and E2 glycoproteins in alphaviruses.</title>
        <authorList>
            <person name="Mukhopadhyay S."/>
            <person name="Zhang W."/>
            <person name="Gabler S."/>
            <person name="Chipman P.R."/>
            <person name="Strauss E.G."/>
            <person name="Strauss J.H."/>
            <person name="Baker T.S."/>
            <person name="Kuhn R.J."/>
            <person name="Rossmann M.G."/>
        </authorList>
    </citation>
    <scope>STRUCTURE BY ELECTRON MICROSCOPY (9.00 ANGSTROMS) OF 114-264; 691-726; 807-1096; 1101-1189 AND 1215-1245</scope>
    <scope>DISULFIDE BONDS</scope>
    <scope>FUNCTION (CAPSID PROTEIN)</scope>
    <scope>INTERACTION WITH THE CAPSID PROTEIN (SPIKE GLYCOPROTEIN E2)</scope>
    <scope>INTERACTION WITH SPIKE GLYCOPROTEIN E2 (CAPSID PROTEIN)</scope>
    <scope>TOPOLOGY</scope>
</reference>
<reference evidence="57 58" key="38">
    <citation type="journal article" date="2010" name="Nature">
        <title>Structural changes of envelope proteins during alphavirus fusion.</title>
        <authorList>
            <person name="Li L."/>
            <person name="Jose J."/>
            <person name="Xiang Y."/>
            <person name="Kuhn R.J."/>
            <person name="Rossmann M.G."/>
        </authorList>
    </citation>
    <scope>X-RAY CRYSTALLOGRAPHY (3.29 ANGSTROMS) OF 329-672 AND 807-1192</scope>
    <scope>DISULFIDE BONDS</scope>
    <scope>FUNCTION (SPIKE GLYCOPROTEIN E2)</scope>
</reference>
<reference evidence="56" key="39">
    <citation type="journal article" date="2011" name="J. Mol. Biol.">
        <title>Molecular links between the E2 envelope glycoprotein and nucleocapsid core in Sindbis virus.</title>
        <authorList>
            <person name="Tang J."/>
            <person name="Jose J."/>
            <person name="Chipman P."/>
            <person name="Zhang W."/>
            <person name="Kuhn R.J."/>
            <person name="Baker T.S."/>
        </authorList>
    </citation>
    <scope>STRUCTURE BY ELECTRON MICROSCOPY (7.00 ANGSTROMS) OF 1-264; 329-751 AND 807-1245</scope>
    <scope>FUNCTION (CAPSID PROTEIN)</scope>
    <scope>INTERACTION WITH THE CAPSID PROTEIN (SPIKE GLYCOPROTEIN E2)</scope>
    <scope>INTERACTION WITH SPIKE GLYCOPROTEIN E2 (CAPSID PROTEIN)</scope>
</reference>
<sequence length="1245" mass="136766">MNRGFFNMLGRRPFPAPTAMWRPRRRRQAAPMPARNGLASQIQQLTTAVSALVIGQATRPQPPRPRPPPRQKKQAPKQPPKPKKPKTQEKKKKQPAKPKPGKRQRMALKLEADRLFDVKNEDGDVIGHALAMEGKVMKPLHVKGTIDHPVLSKLKFTKSSAYDMEFAQLPVNMRSEAFTYTSEHPEGFYNWHHGAVQYSGGRFTIPRGVGGRGDSGRPIMDNSGRVVAIVLGGADEGTRTALSVVTWNSKGKTIKTTPEGTEEWSAAPLVTAMCLLGNVSFPCDRPPTCYTREPSRALDILEENVNHEAYDTLLNAILRCGSSGRSKRSVIDDFTLTSPYLGTCSYCHHTVPCFSPVKIEQVWDEADDNTIRIQTSAQFGYDQSGAASANKYRYMSLKQDHTVKEGTMDDIKISTSGPCRRLSYKGYFLLAKCPPGDSVTVSIVSSNSATSCTLARKIKPKFVGREKYDLPPVHGKKIPCTVYDRLKETTAGYITMHRPRPHAYTSYLEESSGKVYAKPPSGKNITYECKCGDYKTGTVSTRTEITGCTAIKQCVAYKSDQTKWVFNSPDLIRHDDHTAQGKLHLPFKLIPSTCMVPVAHAPNVIHGFKHISLQLDTDHLTLLTTRRLGANPEPTTEWIVGKTVRNFTVDRDGLEYIWGNHEPVRVYAQESAPGDPHGWPHEIVQHYYHRHPVYTILAVASATVAMMIGVTVAVLCACKARRECLTPYALAPNAVIPTSLALLCCVRSANAETFTETMSYLWSNSQPFFWVQLCIPLAAFIVLMRCCSCCLPFLVVAGAYLAKVDAYEHATTVPNVPQIPYKALVERAGYAPLNLEITVMSSEVLPSTNQEYITCKFTTVVPSPKIKCCGSLECQPAAHADYTCKVFGGVYPFMWGGAQCFCDSENSQMSEAYVELSADCASDHAQAIKVHTAAMKVGLRIVYGNTTSFLDVYVNGVTPGTSKDLKVIAGPISASFTPFDHKVVIHRGLVYNYDFPEYGAMKPGAFGDIQATSLTSKDLIASTDIRLLKPSAKNVHVPYTQASSGFEMWKNNSGRPLQETAPFGCKIAVNPLRAVDCSYGNIPISIDIPNAAFIRTSDAPLVSTVKCEVSECTYSADFGGMATLQYVSDREGQCPVHSHSSTATLQESTVHVLEKGAVTVHFSTASPQANFIVSLCGKKTTCNAECKPPADHIVSTPHKNDQEFQAAISKTSWSWLFALFGGASSLLIIGLMIFACSMMLTSTRR</sequence>
<keyword id="KW-0002">3D-structure</keyword>
<keyword id="KW-0167">Capsid protein</keyword>
<keyword id="KW-1165">Clathrin-mediated endocytosis of virus by host</keyword>
<keyword id="KW-0165">Cleavage on pair of basic residues</keyword>
<keyword id="KW-0175">Coiled coil</keyword>
<keyword id="KW-0903">Direct protein sequencing</keyword>
<keyword id="KW-1015">Disulfide bond</keyword>
<keyword id="KW-1170">Fusion of virus membrane with host endosomal membrane</keyword>
<keyword id="KW-1168">Fusion of virus membrane with host membrane</keyword>
<keyword id="KW-0325">Glycoprotein</keyword>
<keyword id="KW-1032">Host cell membrane</keyword>
<keyword id="KW-1035">Host cytoplasm</keyword>
<keyword id="KW-1038">Host endoplasmic reticulum</keyword>
<keyword id="KW-1040">Host Golgi apparatus</keyword>
<keyword id="KW-1043">Host membrane</keyword>
<keyword id="KW-1048">Host nucleus</keyword>
<keyword id="KW-0945">Host-virus interaction</keyword>
<keyword id="KW-0378">Hydrolase</keyword>
<keyword id="KW-0407">Ion channel</keyword>
<keyword id="KW-0406">Ion transport</keyword>
<keyword id="KW-0449">Lipoprotein</keyword>
<keyword id="KW-0472">Membrane</keyword>
<keyword id="KW-0564">Palmitate</keyword>
<keyword id="KW-0645">Protease</keyword>
<keyword id="KW-1185">Reference proteome</keyword>
<keyword id="KW-0688">Ribosomal frameshifting</keyword>
<keyword id="KW-0694">RNA-binding</keyword>
<keyword id="KW-0720">Serine protease</keyword>
<keyword id="KW-1144">T=4 icosahedral capsid protein</keyword>
<keyword id="KW-0812">Transmembrane</keyword>
<keyword id="KW-1133">Transmembrane helix</keyword>
<keyword id="KW-0813">Transport</keyword>
<keyword id="KW-1161">Viral attachment to host cell</keyword>
<keyword id="KW-1234">Viral attachment to host entry receptor</keyword>
<keyword id="KW-0261">Viral envelope protein</keyword>
<keyword id="KW-1182">Viral ion channel</keyword>
<keyword id="KW-1162">Viral penetration into host cytoplasm</keyword>
<keyword id="KW-0946">Virion</keyword>
<keyword id="KW-1164">Virus endocytosis by host</keyword>
<keyword id="KW-1160">Virus entry into host cell</keyword>
<feature type="chain" id="PRO_0000041321" description="Capsid protein">
    <location>
        <begin position="1"/>
        <end position="264"/>
    </location>
</feature>
<feature type="chain" id="PRO_0000226238" description="Precursor of protein E3/E2" evidence="1">
    <location>
        <begin position="265"/>
        <end position="751"/>
    </location>
</feature>
<feature type="chain" id="PRO_0000041322" description="Assembly protein E3">
    <location>
        <begin position="265"/>
        <end position="328"/>
    </location>
</feature>
<feature type="chain" id="PRO_0000041323" description="Spike glycoprotein E2">
    <location>
        <begin position="329"/>
        <end position="751"/>
    </location>
</feature>
<feature type="chain" id="PRO_0000041324" description="6K protein">
    <location>
        <begin position="752"/>
        <end position="806"/>
    </location>
</feature>
<feature type="chain" id="PRO_0000041325" description="Spike glycoprotein E1">
    <location>
        <begin position="807"/>
        <end position="1245"/>
    </location>
</feature>
<feature type="topological domain" description="Extracellular" evidence="9">
    <location>
        <begin position="329"/>
        <end position="690"/>
    </location>
</feature>
<feature type="transmembrane region" description="Helical" evidence="16">
    <location>
        <begin position="691"/>
        <end position="718"/>
    </location>
</feature>
<feature type="topological domain" description="Cytoplasmic" evidence="9">
    <location>
        <begin position="719"/>
        <end position="751"/>
    </location>
</feature>
<feature type="topological domain" description="Extracellular" evidence="9">
    <location>
        <begin position="752"/>
        <end position="763"/>
    </location>
</feature>
<feature type="transmembrane region" description="Helical" evidence="9">
    <location>
        <begin position="764"/>
        <end position="784"/>
    </location>
</feature>
<feature type="topological domain" description="Cytoplasmic" evidence="9">
    <location>
        <position position="785"/>
    </location>
</feature>
<feature type="transmembrane region" description="Helical" evidence="9">
    <location>
        <begin position="786"/>
        <end position="806"/>
    </location>
</feature>
<feature type="topological domain" description="Extracellular" evidence="9">
    <location>
        <begin position="807"/>
        <end position="1214"/>
    </location>
</feature>
<feature type="transmembrane region" description="Helical" evidence="16">
    <location>
        <begin position="1215"/>
        <end position="1239"/>
    </location>
</feature>
<feature type="topological domain" description="Cytoplasmic" evidence="9">
    <location>
        <begin position="1240"/>
        <end position="1245"/>
    </location>
</feature>
<feature type="domain" description="Peptidase S3" evidence="10">
    <location>
        <begin position="114"/>
        <end position="264"/>
    </location>
</feature>
<feature type="region of interest" description="Disordered" evidence="11">
    <location>
        <begin position="1"/>
        <end position="106"/>
    </location>
</feature>
<feature type="region of interest" description="Host transcription inhibition" evidence="3">
    <location>
        <begin position="37"/>
        <end position="70"/>
    </location>
</feature>
<feature type="region of interest" description="Binding to the viral RNA" evidence="5">
    <location>
        <begin position="86"/>
        <end position="115"/>
    </location>
</feature>
<feature type="region of interest" description="Ribosome-binding" evidence="5">
    <location>
        <begin position="100"/>
        <end position="114"/>
    </location>
</feature>
<feature type="region of interest" description="Interaction with spike glycoprotein E2" evidence="22">
    <location>
        <begin position="157"/>
        <end position="162"/>
    </location>
</feature>
<feature type="region of interest" description="Dimerization of the capsid protein" evidence="4">
    <location>
        <begin position="185"/>
        <end position="195"/>
    </location>
</feature>
<feature type="region of interest" description="Dimerization of the capsid protein" evidence="4">
    <location>
        <begin position="221"/>
        <end position="225"/>
    </location>
</feature>
<feature type="region of interest" description="Interaction with spike glycoprotein E2" evidence="22">
    <location>
        <begin position="249"/>
        <end position="253"/>
    </location>
</feature>
<feature type="region of interest" description="Functions as an uncleaved signal peptide for the precursor of protein E3/E2" evidence="2">
    <location>
        <begin position="265"/>
        <end position="279"/>
    </location>
</feature>
<feature type="region of interest" description="Interaction with the capsid protein" evidence="22">
    <location>
        <begin position="719"/>
        <end position="723"/>
    </location>
</feature>
<feature type="region of interest" description="E1 fusion peptide loop" evidence="8">
    <location>
        <begin position="890"/>
        <end position="907"/>
    </location>
</feature>
<feature type="coiled-coil region" evidence="13">
    <location>
        <begin position="682"/>
        <end position="730"/>
    </location>
</feature>
<feature type="coiled-coil region" evidence="13">
    <location>
        <begin position="1196"/>
        <end position="1245"/>
    </location>
</feature>
<feature type="short sequence motif" description="Nuclear localization signal" evidence="3">
    <location>
        <begin position="63"/>
        <end position="100"/>
    </location>
</feature>
<feature type="short sequence motif" description="Nuclear export signal" evidence="3">
    <location>
        <begin position="146"/>
        <end position="156"/>
    </location>
</feature>
<feature type="compositionally biased region" description="Polar residues" evidence="11">
    <location>
        <begin position="38"/>
        <end position="49"/>
    </location>
</feature>
<feature type="compositionally biased region" description="Basic residues" evidence="11">
    <location>
        <begin position="67"/>
        <end position="106"/>
    </location>
</feature>
<feature type="active site" description="Charge relay system" evidence="10 20 34">
    <location>
        <position position="141"/>
    </location>
</feature>
<feature type="active site" description="Charge relay system" evidence="10 20 34">
    <location>
        <position position="163"/>
    </location>
</feature>
<feature type="active site" description="Charge relay system" evidence="10 20 34">
    <location>
        <position position="215"/>
    </location>
</feature>
<feature type="site" description="Involved in dimerization of the capsid protein" evidence="7">
    <location>
        <position position="189"/>
    </location>
</feature>
<feature type="site" description="Involved in dimerization of the capsid protein" evidence="7">
    <location>
        <position position="222"/>
    </location>
</feature>
<feature type="site" description="Cleavage; by autolysis" evidence="2">
    <location>
        <begin position="264"/>
        <end position="265"/>
    </location>
</feature>
<feature type="site" description="Cleavage; by host furin" evidence="2">
    <location>
        <begin position="328"/>
        <end position="329"/>
    </location>
</feature>
<feature type="site" description="Cleavage; by host signal peptidase" evidence="2">
    <location>
        <begin position="751"/>
        <end position="752"/>
    </location>
</feature>
<feature type="site" description="Cleavage; by host signal peptidase" evidence="2">
    <location>
        <begin position="806"/>
        <end position="807"/>
    </location>
</feature>
<feature type="lipid moiety-binding region" description="S-palmitoyl cysteine; by host" evidence="17">
    <location>
        <position position="724"/>
    </location>
</feature>
<feature type="lipid moiety-binding region" description="S-palmitoyl cysteine; by host" evidence="35">
    <location>
        <position position="744"/>
    </location>
</feature>
<feature type="lipid moiety-binding region" description="S-palmitoyl cysteine; by host" evidence="35">
    <location>
        <position position="745"/>
    </location>
</feature>
<feature type="glycosylation site" description="N-linked (GlcNAc...) asparagine; by host" evidence="9">
    <location>
        <position position="278"/>
    </location>
</feature>
<feature type="glycosylation site" description="N-linked (GlcNAc...) asparagine; by host" evidence="13">
    <location>
        <position position="524"/>
    </location>
</feature>
<feature type="glycosylation site" description="N-linked (GlcNAc...) asparagine; by host" evidence="13">
    <location>
        <position position="646"/>
    </location>
</feature>
<feature type="glycosylation site" description="N-linked (GlcNAc...) asparagine; by host" evidence="13">
    <location>
        <position position="945"/>
    </location>
</feature>
<feature type="glycosylation site" description="N-linked (GlcNAc...) asparagine; by host" evidence="13">
    <location>
        <position position="1051"/>
    </location>
</feature>
<feature type="disulfide bond" evidence="19">
    <location>
        <begin position="283"/>
        <end position="289"/>
    </location>
</feature>
<feature type="disulfide bond" evidence="6">
    <location>
        <begin position="480"/>
        <end position="594"/>
    </location>
</feature>
<feature type="disulfide bond" evidence="6">
    <location>
        <begin position="529"/>
        <end position="554"/>
    </location>
</feature>
<feature type="disulfide bond" evidence="6">
    <location>
        <begin position="531"/>
        <end position="548"/>
    </location>
</feature>
<feature type="disulfide bond" evidence="6">
    <location>
        <begin position="724"/>
        <end position="745"/>
    </location>
</feature>
<feature type="disulfide bond" evidence="16 21 53 57">
    <location>
        <begin position="855"/>
        <end position="920"/>
    </location>
</feature>
<feature type="disulfide bond" evidence="16 21 53 57">
    <location>
        <begin position="868"/>
        <end position="900"/>
    </location>
</feature>
<feature type="disulfide bond" evidence="13 16 21 51 53 57">
    <location>
        <begin position="869"/>
        <end position="902"/>
    </location>
</feature>
<feature type="disulfide bond" evidence="16 21 53 57">
    <location>
        <begin position="874"/>
        <end position="884"/>
    </location>
</feature>
<feature type="disulfide bond" evidence="13 16 21 51 53 57">
    <location>
        <begin position="1065"/>
        <end position="1077"/>
    </location>
</feature>
<feature type="disulfide bond" evidence="16 21 53 57">
    <location>
        <begin position="1107"/>
        <end position="1182"/>
    </location>
</feature>
<feature type="disulfide bond" evidence="16 21 53 57">
    <location>
        <begin position="1112"/>
        <end position="1186"/>
    </location>
</feature>
<feature type="disulfide bond" evidence="16 21 53 57">
    <location>
        <begin position="1134"/>
        <end position="1176"/>
    </location>
</feature>
<feature type="sequence variant" description="In strain: AR339.">
    <original>SVI</original>
    <variation>RVT</variation>
    <location>
        <begin position="329"/>
        <end position="331"/>
    </location>
</feature>
<feature type="sequence variant" description="In strain: HRLP.">
    <original>D</original>
    <variation>G</variation>
    <location>
        <position position="333"/>
    </location>
</feature>
<feature type="sequence variant" description="In strain: AR339 and HRLP.">
    <original>V</original>
    <variation>E</variation>
    <location>
        <position position="351"/>
    </location>
</feature>
<feature type="sequence variant" description="In strain: AR339.">
    <original>K</original>
    <variation>E</variation>
    <location>
        <position position="398"/>
    </location>
</feature>
<feature type="sequence variant" description="Causes attenuation of the virus.">
    <original>S</original>
    <variation>R</variation>
    <location>
        <position position="442"/>
    </location>
</feature>
<feature type="sequence variant" description="In strain: ov-100.">
    <original>N</original>
    <variation>KNGSF</variation>
    <location>
        <position position="447"/>
    </location>
</feature>
<feature type="sequence variant" description="In strain: AR339.">
    <original>R</original>
    <variation>G</variation>
    <location>
        <position position="500"/>
    </location>
</feature>
<feature type="sequence variant" description="In strain: TE12.">
    <original>K</original>
    <variation>L</variation>
    <location>
        <position position="719"/>
    </location>
</feature>
<feature type="sequence variant" description="In strain: HRLP.">
    <original>D</original>
    <variation>V</variation>
    <location>
        <position position="919"/>
    </location>
</feature>
<feature type="mutagenesis site" description="97% loss of replication and loss of nucleocapsid accumulation." evidence="37">
    <original>LKL</original>
    <variation>DKK</variation>
    <location>
        <begin position="108"/>
        <end position="110"/>
    </location>
</feature>
<feature type="mutagenesis site" description="95% loss of replication and loss of nucleocapsid accumulation." evidence="37">
    <original>LKL</original>
    <variation>DKN</variation>
    <location>
        <begin position="108"/>
        <end position="110"/>
    </location>
</feature>
<feature type="mutagenesis site" description="80% loss of replication and loss of nucleocapsid accumulation." evidence="37">
    <original>LKL</original>
    <variation>NKD</variation>
    <location>
        <begin position="108"/>
        <end position="110"/>
    </location>
</feature>
<feature type="mutagenesis site" description="80% loss of replication and loss of nucleocapsid accumulation." evidence="37">
    <original>LKL</original>
    <variation>NKK</variation>
    <location>
        <begin position="108"/>
        <end position="110"/>
    </location>
</feature>
<feature type="mutagenesis site" description="No effect on replication and 40% loss of nucleocapsid accumulation." evidence="37">
    <original>KLE</original>
    <variation>ALA</variation>
    <location>
        <begin position="109"/>
        <end position="111"/>
    </location>
</feature>
<feature type="mutagenesis site" description="Complete loss of autocatalytic cleavage by capsid protein." evidence="23">
    <original>H</original>
    <variation>A</variation>
    <variation>P</variation>
    <location>
        <position position="141"/>
    </location>
</feature>
<feature type="mutagenesis site" description="No loss of autocatalytic cleavage by capsid protein. No infectious virus is produced." evidence="23">
    <original>H</original>
    <variation>R</variation>
    <location>
        <position position="141"/>
    </location>
</feature>
<feature type="mutagenesis site" description="No loss of autocatalytic cleavage by capsid protein. No infectious virus is produced." evidence="23">
    <original>D</original>
    <variation>H</variation>
    <variation>Y</variation>
    <location>
        <position position="147"/>
    </location>
</feature>
<feature type="mutagenesis site" description="No loss of autocatalytic cleavage by capsid protein. No infectious virus is produced." evidence="23">
    <original>D</original>
    <variation>H</variation>
    <location>
        <position position="163"/>
    </location>
</feature>
<feature type="mutagenesis site" description="No loss of autocatalytic cleavage by capsid protein. Infectious virus is produced." evidence="23">
    <original>D</original>
    <variation>N</variation>
    <location>
        <position position="163"/>
    </location>
</feature>
<feature type="mutagenesis site" description="Complete loss of autocatalytic cleavage by capsid protein." evidence="23">
    <original>S</original>
    <variation>A</variation>
    <variation>I</variation>
    <location>
        <position position="215"/>
    </location>
</feature>
<feature type="mutagenesis site" description="40% reduction in autocatalytic cleavage by capsid protein. No infectious virus is produced." evidence="23">
    <original>S</original>
    <variation>C</variation>
    <location>
        <position position="215"/>
    </location>
</feature>
<feature type="mutagenesis site" description="90% reduction in autocatalytic cleavage by capsid protein. No infectious virus is produced." evidence="23">
    <original>S</original>
    <variation>T</variation>
    <location>
        <position position="215"/>
    </location>
</feature>
<feature type="mutagenesis site" description="73% loss of cleavage by capsid protease." evidence="42">
    <original>W</original>
    <variation>F</variation>
    <location>
        <position position="264"/>
    </location>
</feature>
<feature type="mutagenesis site" description="Loss of palmitoylation." evidence="17">
    <original>C</original>
    <variation>A</variation>
    <location>
        <position position="724"/>
    </location>
</feature>
<feature type="mutagenesis site" description="Complete loss of infectivity.">
    <original>CC</original>
    <variation>AA</variation>
    <location>
        <begin position="744"/>
        <end position="745"/>
    </location>
</feature>
<feature type="mutagenesis site" description="Loss of palmitoylation." evidence="35">
    <original>C</original>
    <variation>A</variation>
    <location>
        <position position="744"/>
    </location>
</feature>
<feature type="mutagenesis site" description="Loss of palmitoylation." evidence="35">
    <original>C</original>
    <variation>A</variation>
    <location>
        <position position="745"/>
    </location>
</feature>
<feature type="strand" evidence="59">
    <location>
        <begin position="114"/>
        <end position="119"/>
    </location>
</feature>
<feature type="turn" evidence="60">
    <location>
        <begin position="121"/>
        <end position="123"/>
    </location>
</feature>
<feature type="strand" evidence="59">
    <location>
        <begin position="125"/>
        <end position="132"/>
    </location>
</feature>
<feature type="strand" evidence="59">
    <location>
        <begin position="135"/>
        <end position="139"/>
    </location>
</feature>
<feature type="strand" evidence="59">
    <location>
        <begin position="144"/>
        <end position="148"/>
    </location>
</feature>
<feature type="helix" evidence="59">
    <location>
        <begin position="151"/>
        <end position="153"/>
    </location>
</feature>
<feature type="strand" evidence="59">
    <location>
        <begin position="157"/>
        <end position="159"/>
    </location>
</feature>
<feature type="helix" evidence="59">
    <location>
        <begin position="160"/>
        <end position="162"/>
    </location>
</feature>
<feature type="strand" evidence="59">
    <location>
        <begin position="164"/>
        <end position="168"/>
    </location>
</feature>
<feature type="helix" evidence="59">
    <location>
        <begin position="171"/>
        <end position="173"/>
    </location>
</feature>
<feature type="strand" evidence="61">
    <location>
        <begin position="176"/>
        <end position="178"/>
    </location>
</feature>
<feature type="strand" evidence="59">
    <location>
        <begin position="186"/>
        <end position="191"/>
    </location>
</feature>
<feature type="strand" evidence="59">
    <location>
        <begin position="194"/>
        <end position="199"/>
    </location>
</feature>
<feature type="strand" evidence="59">
    <location>
        <begin position="202"/>
        <end position="206"/>
    </location>
</feature>
<feature type="strand" evidence="59">
    <location>
        <begin position="218"/>
        <end position="220"/>
    </location>
</feature>
<feature type="strand" evidence="60">
    <location>
        <begin position="222"/>
        <end position="224"/>
    </location>
</feature>
<feature type="strand" evidence="59">
    <location>
        <begin position="226"/>
        <end position="235"/>
    </location>
</feature>
<feature type="strand" evidence="59">
    <location>
        <begin position="237"/>
        <end position="247"/>
    </location>
</feature>
<feature type="strand" evidence="60">
    <location>
        <begin position="249"/>
        <end position="251"/>
    </location>
</feature>
<feature type="strand" evidence="59">
    <location>
        <begin position="253"/>
        <end position="256"/>
    </location>
</feature>
<feature type="strand" evidence="62">
    <location>
        <begin position="342"/>
        <end position="345"/>
    </location>
</feature>
<feature type="strand" evidence="62">
    <location>
        <begin position="347"/>
        <end position="351"/>
    </location>
</feature>
<feature type="strand" evidence="62">
    <location>
        <begin position="353"/>
        <end position="357"/>
    </location>
</feature>
<feature type="strand" evidence="62">
    <location>
        <begin position="361"/>
        <end position="363"/>
    </location>
</feature>
<feature type="strand" evidence="62">
    <location>
        <begin position="367"/>
        <end position="374"/>
    </location>
</feature>
<feature type="strand" evidence="62">
    <location>
        <begin position="376"/>
        <end position="380"/>
    </location>
</feature>
<feature type="strand" evidence="62">
    <location>
        <begin position="382"/>
        <end position="385"/>
    </location>
</feature>
<feature type="strand" evidence="62">
    <location>
        <begin position="391"/>
        <end position="393"/>
    </location>
</feature>
<feature type="strand" evidence="62">
    <location>
        <begin position="405"/>
        <end position="407"/>
    </location>
</feature>
<feature type="strand" evidence="62">
    <location>
        <begin position="410"/>
        <end position="425"/>
    </location>
</feature>
<feature type="strand" evidence="62">
    <location>
        <begin position="428"/>
        <end position="432"/>
    </location>
</feature>
<feature type="strand" evidence="62">
    <location>
        <begin position="439"/>
        <end position="447"/>
    </location>
</feature>
<feature type="strand" evidence="62">
    <location>
        <begin position="449"/>
        <end position="454"/>
    </location>
</feature>
<feature type="strand" evidence="62">
    <location>
        <begin position="464"/>
        <end position="466"/>
    </location>
</feature>
<feature type="strand" evidence="62">
    <location>
        <begin position="473"/>
        <end position="483"/>
    </location>
</feature>
<feature type="strand" evidence="62">
    <location>
        <begin position="589"/>
        <end position="596"/>
    </location>
</feature>
<feature type="strand" evidence="62">
    <location>
        <begin position="603"/>
        <end position="607"/>
    </location>
</feature>
<feature type="strand" evidence="62">
    <location>
        <begin position="610"/>
        <end position="630"/>
    </location>
</feature>
<feature type="strand" evidence="62">
    <location>
        <begin position="637"/>
        <end position="643"/>
    </location>
</feature>
<feature type="strand" evidence="62">
    <location>
        <begin position="654"/>
        <end position="661"/>
    </location>
</feature>
<feature type="strand" evidence="62">
    <location>
        <begin position="807"/>
        <end position="814"/>
    </location>
</feature>
<feature type="strand" evidence="62">
    <location>
        <begin position="821"/>
        <end position="825"/>
    </location>
</feature>
<feature type="strand" evidence="62">
    <location>
        <begin position="833"/>
        <end position="842"/>
    </location>
</feature>
<feature type="strand" evidence="62">
    <location>
        <begin position="845"/>
        <end position="854"/>
    </location>
</feature>
<feature type="strand" evidence="62">
    <location>
        <begin position="857"/>
        <end position="860"/>
    </location>
</feature>
<feature type="strand" evidence="62">
    <location>
        <begin position="883"/>
        <end position="889"/>
    </location>
</feature>
<feature type="turn" evidence="62">
    <location>
        <begin position="894"/>
        <end position="899"/>
    </location>
</feature>
<feature type="strand" evidence="62">
    <location>
        <begin position="903"/>
        <end position="905"/>
    </location>
</feature>
<feature type="strand" evidence="62">
    <location>
        <begin position="907"/>
        <end position="916"/>
    </location>
</feature>
<feature type="turn" evidence="62">
    <location>
        <begin position="918"/>
        <end position="922"/>
    </location>
</feature>
<feature type="strand" evidence="62">
    <location>
        <begin position="925"/>
        <end position="934"/>
    </location>
</feature>
<feature type="strand" evidence="62">
    <location>
        <begin position="937"/>
        <end position="943"/>
    </location>
</feature>
<feature type="strand" evidence="62">
    <location>
        <begin position="946"/>
        <end position="951"/>
    </location>
</feature>
<feature type="strand" evidence="62">
    <location>
        <begin position="954"/>
        <end position="957"/>
    </location>
</feature>
<feature type="strand" evidence="62">
    <location>
        <begin position="959"/>
        <end position="961"/>
    </location>
</feature>
<feature type="strand" evidence="62">
    <location>
        <begin position="966"/>
        <end position="969"/>
    </location>
</feature>
<feature type="strand" evidence="62">
    <location>
        <begin position="981"/>
        <end position="985"/>
    </location>
</feature>
<feature type="strand" evidence="62">
    <location>
        <begin position="990"/>
        <end position="992"/>
    </location>
</feature>
<feature type="strand" evidence="62">
    <location>
        <begin position="1003"/>
        <end position="1005"/>
    </location>
</feature>
<feature type="strand" evidence="62">
    <location>
        <begin position="1008"/>
        <end position="1013"/>
    </location>
</feature>
<feature type="turn" evidence="62">
    <location>
        <begin position="1014"/>
        <end position="1016"/>
    </location>
</feature>
<feature type="helix" evidence="62">
    <location>
        <begin position="1045"/>
        <end position="1050"/>
    </location>
</feature>
<feature type="helix" evidence="62">
    <location>
        <begin position="1057"/>
        <end position="1059"/>
    </location>
</feature>
<feature type="strand" evidence="62">
    <location>
        <begin position="1066"/>
        <end position="1068"/>
    </location>
</feature>
<feature type="turn" evidence="62">
    <location>
        <begin position="1069"/>
        <end position="1072"/>
    </location>
</feature>
<feature type="strand" evidence="62">
    <location>
        <begin position="1073"/>
        <end position="1075"/>
    </location>
</feature>
<feature type="strand" evidence="62">
    <location>
        <begin position="1080"/>
        <end position="1089"/>
    </location>
</feature>
<feature type="helix" evidence="62">
    <location>
        <begin position="1090"/>
        <end position="1092"/>
    </location>
</feature>
<feature type="strand" evidence="62">
    <location>
        <begin position="1102"/>
        <end position="1111"/>
    </location>
</feature>
<feature type="strand" evidence="62">
    <location>
        <begin position="1116"/>
        <end position="1118"/>
    </location>
</feature>
<feature type="strand" evidence="62">
    <location>
        <begin position="1120"/>
        <end position="1130"/>
    </location>
</feature>
<feature type="strand" evidence="62">
    <location>
        <begin position="1137"/>
        <end position="1140"/>
    </location>
</feature>
<feature type="strand" evidence="62">
    <location>
        <begin position="1144"/>
        <end position="1146"/>
    </location>
</feature>
<feature type="strand" evidence="62">
    <location>
        <begin position="1148"/>
        <end position="1150"/>
    </location>
</feature>
<feature type="strand" evidence="62">
    <location>
        <begin position="1157"/>
        <end position="1163"/>
    </location>
</feature>
<organismHost>
    <name type="scientific">Acrocephalus scirpaceus</name>
    <name type="common">Eurasian reed-warbler</name>
    <dbReference type="NCBI Taxonomy" id="48156"/>
</organismHost>
<organismHost>
    <name type="scientific">Aedes</name>
    <dbReference type="NCBI Taxonomy" id="7158"/>
</organismHost>
<organismHost>
    <name type="scientific">Culex</name>
    <dbReference type="NCBI Taxonomy" id="53527"/>
</organismHost>
<organismHost>
    <name type="scientific">Homo sapiens</name>
    <name type="common">Human</name>
    <dbReference type="NCBI Taxonomy" id="9606"/>
</organismHost>
<organismHost>
    <name type="scientific">Motacilla alba</name>
    <name type="common">White wagtail</name>
    <name type="synonym">Pied wagtail</name>
    <dbReference type="NCBI Taxonomy" id="45807"/>
</organismHost>
<organismHost>
    <name type="scientific">Streptopelia turtur</name>
    <dbReference type="NCBI Taxonomy" id="177155"/>
</organismHost>
<organism>
    <name type="scientific">Sindbis virus</name>
    <name type="common">SINV</name>
    <dbReference type="NCBI Taxonomy" id="11034"/>
    <lineage>
        <taxon>Viruses</taxon>
        <taxon>Riboviria</taxon>
        <taxon>Orthornavirae</taxon>
        <taxon>Kitrinoviricota</taxon>
        <taxon>Alsuviricetes</taxon>
        <taxon>Martellivirales</taxon>
        <taxon>Togaviridae</taxon>
        <taxon>Alphavirus</taxon>
    </lineage>
</organism>
<dbReference type="EC" id="3.4.21.90" evidence="2"/>
<dbReference type="EMBL" id="V01403">
    <property type="protein sequence ID" value="CAA24684.1"/>
    <property type="molecule type" value="Genomic_RNA"/>
</dbReference>
<dbReference type="EMBL" id="J02363">
    <property type="protein sequence ID" value="AAA96976.1"/>
    <property type="molecule type" value="Genomic_RNA"/>
</dbReference>
<dbReference type="EMBL" id="M13818">
    <property type="protein sequence ID" value="AAA47485.1"/>
    <property type="molecule type" value="Genomic_RNA"/>
</dbReference>
<dbReference type="EMBL" id="AB372876">
    <property type="protein sequence ID" value="BAH70330.1"/>
    <property type="molecule type" value="Genomic_RNA"/>
</dbReference>
<dbReference type="PIR" id="A03916">
    <property type="entry name" value="VHWVB"/>
</dbReference>
<dbReference type="PIR" id="A25894">
    <property type="entry name" value="VHWVSB"/>
</dbReference>
<dbReference type="PIR" id="B03916">
    <property type="entry name" value="VHWVB2"/>
</dbReference>
<dbReference type="RefSeq" id="NP_062890.1">
    <molecule id="P03316-1"/>
    <property type="nucleotide sequence ID" value="NC_001547.1"/>
</dbReference>
<dbReference type="PDB" id="1KXA">
    <property type="method" value="X-ray"/>
    <property type="resolution" value="3.10 A"/>
    <property type="chains" value="A=106-264"/>
</dbReference>
<dbReference type="PDB" id="1KXB">
    <property type="method" value="X-ray"/>
    <property type="resolution" value="2.90 A"/>
    <property type="chains" value="A=106-264"/>
</dbReference>
<dbReference type="PDB" id="1KXC">
    <property type="method" value="X-ray"/>
    <property type="resolution" value="3.10 A"/>
    <property type="chains" value="A=106-264"/>
</dbReference>
<dbReference type="PDB" id="1KXD">
    <property type="method" value="X-ray"/>
    <property type="resolution" value="3.00 A"/>
    <property type="chains" value="A=106-264"/>
</dbReference>
<dbReference type="PDB" id="1KXE">
    <property type="method" value="X-ray"/>
    <property type="resolution" value="3.20 A"/>
    <property type="chains" value="A=106-264"/>
</dbReference>
<dbReference type="PDB" id="1KXF">
    <property type="method" value="X-ray"/>
    <property type="resolution" value="2.38 A"/>
    <property type="chains" value="A=106-264"/>
</dbReference>
<dbReference type="PDB" id="1LD4">
    <property type="method" value="EM"/>
    <property type="resolution" value="11.40 A"/>
    <property type="chains" value="A/B/C/D=1-264, M/N/O/P=807-1245"/>
</dbReference>
<dbReference type="PDB" id="1SVP">
    <property type="method" value="X-ray"/>
    <property type="resolution" value="2.00 A"/>
    <property type="chains" value="A/B=106-266"/>
</dbReference>
<dbReference type="PDB" id="1Z8Y">
    <property type="method" value="EM"/>
    <property type="resolution" value="9.00 A"/>
    <property type="chains" value="A/C/E/G=807-1096, B/D/F/H=1101-1189, I/K/M/O=1215-1245, J/L/N/P=691-726, Q/R/S/T=114-264"/>
</dbReference>
<dbReference type="PDB" id="2SNV">
    <property type="method" value="X-ray"/>
    <property type="resolution" value="2.80 A"/>
    <property type="chains" value="A=114-264"/>
</dbReference>
<dbReference type="PDB" id="2SNW">
    <property type="method" value="X-ray"/>
    <property type="resolution" value="2.70 A"/>
    <property type="chains" value="A/B=107-264"/>
</dbReference>
<dbReference type="PDB" id="3J0F">
    <property type="method" value="EM"/>
    <property type="chains" value="A/B/C/D=1-264, E/F/G/H=807-1245, I/J/K/L=329-751"/>
</dbReference>
<dbReference type="PDB" id="3MUU">
    <property type="method" value="X-ray"/>
    <property type="resolution" value="3.29 A"/>
    <property type="chains" value="A/B/C/D/E/F=329-672, A/B/C/D/E/F=807-1192"/>
</dbReference>
<dbReference type="PDB" id="3MUW">
    <property type="method" value="EM"/>
    <property type="chains" value="A/D/E/F=807-1190, U/X/Y/Z=329-672"/>
</dbReference>
<dbReference type="PDBsum" id="1KXA"/>
<dbReference type="PDBsum" id="1KXB"/>
<dbReference type="PDBsum" id="1KXC"/>
<dbReference type="PDBsum" id="1KXD"/>
<dbReference type="PDBsum" id="1KXE"/>
<dbReference type="PDBsum" id="1KXF"/>
<dbReference type="PDBsum" id="1LD4"/>
<dbReference type="PDBsum" id="1SVP"/>
<dbReference type="PDBsum" id="1Z8Y"/>
<dbReference type="PDBsum" id="2SNV"/>
<dbReference type="PDBsum" id="2SNW"/>
<dbReference type="PDBsum" id="3J0F"/>
<dbReference type="PDBsum" id="3MUU"/>
<dbReference type="PDBsum" id="3MUW"/>
<dbReference type="SMR" id="P03316"/>
<dbReference type="DIP" id="DIP-29032N"/>
<dbReference type="IntAct" id="P03316">
    <property type="interactions" value="1"/>
</dbReference>
<dbReference type="DrugBank" id="DB03316">
    <property type="generic name" value="1,4-Dioxane"/>
</dbReference>
<dbReference type="MEROPS" id="S03.001"/>
<dbReference type="SwissPalm" id="P03316"/>
<dbReference type="ABCD" id="P03316">
    <property type="antibodies" value="1 sequenced antibody"/>
</dbReference>
<dbReference type="GeneID" id="1502155"/>
<dbReference type="KEGG" id="vg:1502155"/>
<dbReference type="EvolutionaryTrace" id="P03316"/>
<dbReference type="Proteomes" id="UP000006710">
    <property type="component" value="Genome"/>
</dbReference>
<dbReference type="GO" id="GO:0030430">
    <property type="term" value="C:host cell cytoplasm"/>
    <property type="evidence" value="ECO:0007669"/>
    <property type="project" value="UniProtKB-SubCell"/>
</dbReference>
<dbReference type="GO" id="GO:0042025">
    <property type="term" value="C:host cell nucleus"/>
    <property type="evidence" value="ECO:0007669"/>
    <property type="project" value="UniProtKB-SubCell"/>
</dbReference>
<dbReference type="GO" id="GO:0020002">
    <property type="term" value="C:host cell plasma membrane"/>
    <property type="evidence" value="ECO:0000314"/>
    <property type="project" value="CACAO"/>
</dbReference>
<dbReference type="GO" id="GO:0098029">
    <property type="term" value="C:icosahedral viral capsid, spike"/>
    <property type="evidence" value="ECO:0000314"/>
    <property type="project" value="CACAO"/>
</dbReference>
<dbReference type="GO" id="GO:0016020">
    <property type="term" value="C:membrane"/>
    <property type="evidence" value="ECO:0007669"/>
    <property type="project" value="UniProtKB-KW"/>
</dbReference>
<dbReference type="GO" id="GO:0039619">
    <property type="term" value="C:T=4 icosahedral viral capsid"/>
    <property type="evidence" value="ECO:0007669"/>
    <property type="project" value="UniProtKB-KW"/>
</dbReference>
<dbReference type="GO" id="GO:0019031">
    <property type="term" value="C:viral envelope"/>
    <property type="evidence" value="ECO:0007669"/>
    <property type="project" value="UniProtKB-KW"/>
</dbReference>
<dbReference type="GO" id="GO:0055036">
    <property type="term" value="C:virion membrane"/>
    <property type="evidence" value="ECO:0007669"/>
    <property type="project" value="UniProtKB-SubCell"/>
</dbReference>
<dbReference type="GO" id="GO:0003723">
    <property type="term" value="F:RNA binding"/>
    <property type="evidence" value="ECO:0007669"/>
    <property type="project" value="UniProtKB-KW"/>
</dbReference>
<dbReference type="GO" id="GO:0004252">
    <property type="term" value="F:serine-type endopeptidase activity"/>
    <property type="evidence" value="ECO:0007669"/>
    <property type="project" value="InterPro"/>
</dbReference>
<dbReference type="GO" id="GO:0005198">
    <property type="term" value="F:structural molecule activity"/>
    <property type="evidence" value="ECO:0007669"/>
    <property type="project" value="InterPro"/>
</dbReference>
<dbReference type="GO" id="GO:0044389">
    <property type="term" value="F:ubiquitin-like protein ligase binding"/>
    <property type="evidence" value="ECO:0000353"/>
    <property type="project" value="ParkinsonsUK-UCL"/>
</dbReference>
<dbReference type="GO" id="GO:0075512">
    <property type="term" value="P:clathrin-dependent endocytosis of virus by host cell"/>
    <property type="evidence" value="ECO:0007669"/>
    <property type="project" value="UniProtKB-KW"/>
</dbReference>
<dbReference type="GO" id="GO:0039654">
    <property type="term" value="P:fusion of virus membrane with host endosome membrane"/>
    <property type="evidence" value="ECO:0007669"/>
    <property type="project" value="UniProtKB-KW"/>
</dbReference>
<dbReference type="GO" id="GO:0061025">
    <property type="term" value="P:membrane fusion"/>
    <property type="evidence" value="ECO:0000314"/>
    <property type="project" value="CACAO"/>
</dbReference>
<dbReference type="GO" id="GO:0006508">
    <property type="term" value="P:proteolysis"/>
    <property type="evidence" value="ECO:0007669"/>
    <property type="project" value="UniProtKB-KW"/>
</dbReference>
<dbReference type="GO" id="GO:0039722">
    <property type="term" value="P:symbiont-mediated suppression of host toll-like receptor signaling pathway"/>
    <property type="evidence" value="ECO:0000314"/>
    <property type="project" value="UniProtKB"/>
</dbReference>
<dbReference type="GO" id="GO:0075523">
    <property type="term" value="P:viral translational frameshifting"/>
    <property type="evidence" value="ECO:0007669"/>
    <property type="project" value="UniProtKB-KW"/>
</dbReference>
<dbReference type="GO" id="GO:0019062">
    <property type="term" value="P:virion attachment to host cell"/>
    <property type="evidence" value="ECO:0000315"/>
    <property type="project" value="CACAO"/>
</dbReference>
<dbReference type="FunFam" id="2.40.10.10:FF:000075">
    <property type="entry name" value="Structural polyprotein"/>
    <property type="match status" value="1"/>
</dbReference>
<dbReference type="Gene3D" id="1.10.287.2230">
    <property type="match status" value="1"/>
</dbReference>
<dbReference type="Gene3D" id="2.60.40.350">
    <property type="match status" value="1"/>
</dbReference>
<dbReference type="Gene3D" id="2.60.40.3200">
    <property type="entry name" value="Alphavirus E2 glycoprotein, A domain"/>
    <property type="match status" value="1"/>
</dbReference>
<dbReference type="Gene3D" id="2.60.40.4310">
    <property type="entry name" value="Alphavirus E2 glycoprotein, domain B"/>
    <property type="match status" value="1"/>
</dbReference>
<dbReference type="Gene3D" id="2.60.40.2400">
    <property type="entry name" value="Alphavirus E2 glycoprotein, domain C"/>
    <property type="match status" value="1"/>
</dbReference>
<dbReference type="Gene3D" id="2.60.98.10">
    <property type="entry name" value="Tick-borne Encephalitis virus Glycoprotein, domain 1"/>
    <property type="match status" value="3"/>
</dbReference>
<dbReference type="Gene3D" id="2.40.10.10">
    <property type="entry name" value="Trypsin-like serine proteases"/>
    <property type="match status" value="2"/>
</dbReference>
<dbReference type="InterPro" id="IPR002548">
    <property type="entry name" value="Alpha_E1_glycop"/>
</dbReference>
<dbReference type="InterPro" id="IPR000936">
    <property type="entry name" value="Alpha_E2_glycop"/>
</dbReference>
<dbReference type="InterPro" id="IPR002533">
    <property type="entry name" value="Alpha_E3_glycop"/>
</dbReference>
<dbReference type="InterPro" id="IPR042304">
    <property type="entry name" value="Alphavir_E2_A"/>
</dbReference>
<dbReference type="InterPro" id="IPR042305">
    <property type="entry name" value="Alphavir_E2_B"/>
</dbReference>
<dbReference type="InterPro" id="IPR042306">
    <property type="entry name" value="Alphavir_E2_C"/>
</dbReference>
<dbReference type="InterPro" id="IPR000336">
    <property type="entry name" value="Flavivir/Alphavir_Ig-like_sf"/>
</dbReference>
<dbReference type="InterPro" id="IPR036253">
    <property type="entry name" value="Glycoprot_cen/dimer_sf"/>
</dbReference>
<dbReference type="InterPro" id="IPR038055">
    <property type="entry name" value="Glycoprot_E_dimer_dom"/>
</dbReference>
<dbReference type="InterPro" id="IPR014756">
    <property type="entry name" value="Ig_E-set"/>
</dbReference>
<dbReference type="InterPro" id="IPR009003">
    <property type="entry name" value="Peptidase_S1_PA"/>
</dbReference>
<dbReference type="InterPro" id="IPR043504">
    <property type="entry name" value="Peptidase_S1_PA_chymotrypsin"/>
</dbReference>
<dbReference type="InterPro" id="IPR000930">
    <property type="entry name" value="Peptidase_S3"/>
</dbReference>
<dbReference type="Pfam" id="PF01589">
    <property type="entry name" value="Alpha_E1_glycop"/>
    <property type="match status" value="1"/>
</dbReference>
<dbReference type="Pfam" id="PF00943">
    <property type="entry name" value="Alpha_E2_glycop"/>
    <property type="match status" value="1"/>
</dbReference>
<dbReference type="Pfam" id="PF01563">
    <property type="entry name" value="Alpha_E3_glycop"/>
    <property type="match status" value="1"/>
</dbReference>
<dbReference type="Pfam" id="PF00944">
    <property type="entry name" value="Peptidase_S3"/>
    <property type="match status" value="1"/>
</dbReference>
<dbReference type="PRINTS" id="PR00798">
    <property type="entry name" value="TOGAVIRIN"/>
</dbReference>
<dbReference type="SUPFAM" id="SSF81296">
    <property type="entry name" value="E set domains"/>
    <property type="match status" value="1"/>
</dbReference>
<dbReference type="SUPFAM" id="SSF50494">
    <property type="entry name" value="Trypsin-like serine proteases"/>
    <property type="match status" value="1"/>
</dbReference>
<dbReference type="SUPFAM" id="SSF56983">
    <property type="entry name" value="Viral glycoprotein, central and dimerisation domains"/>
    <property type="match status" value="1"/>
</dbReference>
<dbReference type="PROSITE" id="PS51690">
    <property type="entry name" value="ALPHAVIRUS_CP"/>
    <property type="match status" value="1"/>
</dbReference>
<accession>P03316</accession>
<accession>C4T9C2</accession>
<accession>P11259</accession>
<accession>Q88870</accession>
<accession>Q88871</accession>
<accession>Q88872</accession>
<accession>Q88873</accession>
<accession>Q88874</accession>
<name>POLS_SINDV</name>
<evidence type="ECO:0000250" key="1"/>
<evidence type="ECO:0000250" key="2">
    <source>
        <dbReference type="UniProtKB" id="P03315"/>
    </source>
</evidence>
<evidence type="ECO:0000250" key="3">
    <source>
        <dbReference type="UniProtKB" id="P09592"/>
    </source>
</evidence>
<evidence type="ECO:0000250" key="4">
    <source>
        <dbReference type="UniProtKB" id="P0DOK1"/>
    </source>
</evidence>
<evidence type="ECO:0000250" key="5">
    <source>
        <dbReference type="UniProtKB" id="P27284"/>
    </source>
</evidence>
<evidence type="ECO:0000250" key="6">
    <source>
        <dbReference type="UniProtKB" id="Q5XXP3"/>
    </source>
</evidence>
<evidence type="ECO:0000250" key="7">
    <source>
        <dbReference type="UniProtKB" id="Q86925"/>
    </source>
</evidence>
<evidence type="ECO:0000250" key="8">
    <source>
        <dbReference type="UniProtKB" id="Q8JUX5"/>
    </source>
</evidence>
<evidence type="ECO:0000255" key="9"/>
<evidence type="ECO:0000255" key="10">
    <source>
        <dbReference type="PROSITE-ProRule" id="PRU01027"/>
    </source>
</evidence>
<evidence type="ECO:0000256" key="11">
    <source>
        <dbReference type="SAM" id="MobiDB-lite"/>
    </source>
</evidence>
<evidence type="ECO:0000269" key="12">
    <source>
    </source>
</evidence>
<evidence type="ECO:0000269" key="13">
    <source>
    </source>
</evidence>
<evidence type="ECO:0000269" key="14">
    <source>
    </source>
</evidence>
<evidence type="ECO:0000269" key="15">
    <source>
    </source>
</evidence>
<evidence type="ECO:0000269" key="16">
    <source>
    </source>
</evidence>
<evidence type="ECO:0000269" key="17">
    <source>
    </source>
</evidence>
<evidence type="ECO:0000269" key="18">
    <source>
    </source>
</evidence>
<evidence type="ECO:0000269" key="19">
    <source>
    </source>
</evidence>
<evidence type="ECO:0000269" key="20">
    <source>
    </source>
</evidence>
<evidence type="ECO:0000269" key="21">
    <source>
    </source>
</evidence>
<evidence type="ECO:0000269" key="22">
    <source>
    </source>
</evidence>
<evidence type="ECO:0000269" key="23">
    <source>
    </source>
</evidence>
<evidence type="ECO:0000269" key="24">
    <source>
    </source>
</evidence>
<evidence type="ECO:0000269" key="25">
    <source>
    </source>
</evidence>
<evidence type="ECO:0000269" key="26">
    <source>
    </source>
</evidence>
<evidence type="ECO:0000269" key="27">
    <source>
    </source>
</evidence>
<evidence type="ECO:0000269" key="28">
    <source>
    </source>
</evidence>
<evidence type="ECO:0000269" key="29">
    <source>
    </source>
</evidence>
<evidence type="ECO:0000269" key="30">
    <source>
    </source>
</evidence>
<evidence type="ECO:0000269" key="31">
    <source>
    </source>
</evidence>
<evidence type="ECO:0000269" key="32">
    <source>
    </source>
</evidence>
<evidence type="ECO:0000269" key="33">
    <source>
    </source>
</evidence>
<evidence type="ECO:0000269" key="34">
    <source>
    </source>
</evidence>
<evidence type="ECO:0000269" key="35">
    <source>
    </source>
</evidence>
<evidence type="ECO:0000269" key="36">
    <source>
    </source>
</evidence>
<evidence type="ECO:0000269" key="37">
    <source>
    </source>
</evidence>
<evidence type="ECO:0000269" key="38">
    <source>
    </source>
</evidence>
<evidence type="ECO:0000269" key="39">
    <source>
    </source>
</evidence>
<evidence type="ECO:0000269" key="40">
    <source>
    </source>
</evidence>
<evidence type="ECO:0000269" key="41">
    <source>
    </source>
</evidence>
<evidence type="ECO:0000269" key="42">
    <source>
    </source>
</evidence>
<evidence type="ECO:0000269" key="43">
    <source>
    </source>
</evidence>
<evidence type="ECO:0000305" key="44"/>
<evidence type="ECO:0007744" key="45">
    <source>
        <dbReference type="PDB" id="1KXA"/>
    </source>
</evidence>
<evidence type="ECO:0007744" key="46">
    <source>
        <dbReference type="PDB" id="1KXB"/>
    </source>
</evidence>
<evidence type="ECO:0007744" key="47">
    <source>
        <dbReference type="PDB" id="1KXC"/>
    </source>
</evidence>
<evidence type="ECO:0007744" key="48">
    <source>
        <dbReference type="PDB" id="1KXD"/>
    </source>
</evidence>
<evidence type="ECO:0007744" key="49">
    <source>
        <dbReference type="PDB" id="1KXE"/>
    </source>
</evidence>
<evidence type="ECO:0007744" key="50">
    <source>
        <dbReference type="PDB" id="1KXF"/>
    </source>
</evidence>
<evidence type="ECO:0007744" key="51">
    <source>
        <dbReference type="PDB" id="1LD4"/>
    </source>
</evidence>
<evidence type="ECO:0007744" key="52">
    <source>
        <dbReference type="PDB" id="1SVP"/>
    </source>
</evidence>
<evidence type="ECO:0007744" key="53">
    <source>
        <dbReference type="PDB" id="1Z8Y"/>
    </source>
</evidence>
<evidence type="ECO:0007744" key="54">
    <source>
        <dbReference type="PDB" id="2SNV"/>
    </source>
</evidence>
<evidence type="ECO:0007744" key="55">
    <source>
        <dbReference type="PDB" id="2SNW"/>
    </source>
</evidence>
<evidence type="ECO:0007744" key="56">
    <source>
        <dbReference type="PDB" id="3J0F"/>
    </source>
</evidence>
<evidence type="ECO:0007744" key="57">
    <source>
        <dbReference type="PDB" id="3MUU"/>
    </source>
</evidence>
<evidence type="ECO:0007744" key="58">
    <source>
        <dbReference type="PDB" id="3MUW"/>
    </source>
</evidence>
<evidence type="ECO:0007829" key="59">
    <source>
        <dbReference type="PDB" id="1SVP"/>
    </source>
</evidence>
<evidence type="ECO:0007829" key="60">
    <source>
        <dbReference type="PDB" id="2SNV"/>
    </source>
</evidence>
<evidence type="ECO:0007829" key="61">
    <source>
        <dbReference type="PDB" id="2SNW"/>
    </source>
</evidence>
<evidence type="ECO:0007829" key="62">
    <source>
        <dbReference type="PDB" id="3MUU"/>
    </source>
</evidence>
<proteinExistence type="evidence at protein level"/>